<name>AGUA_LEGPA</name>
<keyword id="KW-0378">Hydrolase</keyword>
<proteinExistence type="inferred from homology"/>
<reference key="1">
    <citation type="journal article" date="2004" name="Nat. Genet.">
        <title>Evidence in the Legionella pneumophila genome for exploitation of host cell functions and high genome plasticity.</title>
        <authorList>
            <person name="Cazalet C."/>
            <person name="Rusniok C."/>
            <person name="Brueggemann H."/>
            <person name="Zidane N."/>
            <person name="Magnier A."/>
            <person name="Ma L."/>
            <person name="Tichit M."/>
            <person name="Jarraud S."/>
            <person name="Bouchier C."/>
            <person name="Vandenesch F."/>
            <person name="Kunst F."/>
            <person name="Etienne J."/>
            <person name="Glaser P."/>
            <person name="Buchrieser C."/>
        </authorList>
    </citation>
    <scope>NUCLEOTIDE SEQUENCE [LARGE SCALE GENOMIC DNA]</scope>
    <source>
        <strain>Paris</strain>
    </source>
</reference>
<organism>
    <name type="scientific">Legionella pneumophila (strain Paris)</name>
    <dbReference type="NCBI Taxonomy" id="297246"/>
    <lineage>
        <taxon>Bacteria</taxon>
        <taxon>Pseudomonadati</taxon>
        <taxon>Pseudomonadota</taxon>
        <taxon>Gammaproteobacteria</taxon>
        <taxon>Legionellales</taxon>
        <taxon>Legionellaceae</taxon>
        <taxon>Legionella</taxon>
    </lineage>
</organism>
<gene>
    <name evidence="1" type="primary">aguA</name>
    <name type="ordered locus">lpp0005</name>
</gene>
<evidence type="ECO:0000255" key="1">
    <source>
        <dbReference type="HAMAP-Rule" id="MF_01841"/>
    </source>
</evidence>
<feature type="chain" id="PRO_0000194328" description="Putative agmatine deiminase">
    <location>
        <begin position="1"/>
        <end position="346"/>
    </location>
</feature>
<feature type="active site" description="Amidino-cysteine intermediate" evidence="1">
    <location>
        <position position="333"/>
    </location>
</feature>
<dbReference type="EC" id="3.5.3.12" evidence="1"/>
<dbReference type="EMBL" id="CR628336">
    <property type="protein sequence ID" value="CAH11153.1"/>
    <property type="molecule type" value="Genomic_DNA"/>
</dbReference>
<dbReference type="RefSeq" id="WP_011212651.1">
    <property type="nucleotide sequence ID" value="NC_006368.1"/>
</dbReference>
<dbReference type="SMR" id="Q5X986"/>
<dbReference type="KEGG" id="lpp:lpp0005"/>
<dbReference type="LegioList" id="lpp0005"/>
<dbReference type="HOGENOM" id="CLU_037682_0_0_6"/>
<dbReference type="GO" id="GO:0047632">
    <property type="term" value="F:agmatine deiminase activity"/>
    <property type="evidence" value="ECO:0007669"/>
    <property type="project" value="UniProtKB-UniRule"/>
</dbReference>
<dbReference type="GO" id="GO:0004668">
    <property type="term" value="F:protein-arginine deiminase activity"/>
    <property type="evidence" value="ECO:0007669"/>
    <property type="project" value="InterPro"/>
</dbReference>
<dbReference type="GO" id="GO:0009446">
    <property type="term" value="P:putrescine biosynthetic process"/>
    <property type="evidence" value="ECO:0007669"/>
    <property type="project" value="InterPro"/>
</dbReference>
<dbReference type="Gene3D" id="3.75.10.10">
    <property type="entry name" value="L-arginine/glycine Amidinotransferase, Chain A"/>
    <property type="match status" value="1"/>
</dbReference>
<dbReference type="HAMAP" id="MF_01841">
    <property type="entry name" value="Agmatine_deimin"/>
    <property type="match status" value="1"/>
</dbReference>
<dbReference type="InterPro" id="IPR017754">
    <property type="entry name" value="Agmatine_deiminase"/>
</dbReference>
<dbReference type="InterPro" id="IPR007466">
    <property type="entry name" value="Peptidyl-Arg-deiminase_porph"/>
</dbReference>
<dbReference type="PANTHER" id="PTHR31377">
    <property type="entry name" value="AGMATINE DEIMINASE-RELATED"/>
    <property type="match status" value="1"/>
</dbReference>
<dbReference type="PANTHER" id="PTHR31377:SF0">
    <property type="entry name" value="AGMATINE DEIMINASE-RELATED"/>
    <property type="match status" value="1"/>
</dbReference>
<dbReference type="Pfam" id="PF04371">
    <property type="entry name" value="PAD_porph"/>
    <property type="match status" value="1"/>
</dbReference>
<dbReference type="SUPFAM" id="SSF55909">
    <property type="entry name" value="Pentein"/>
    <property type="match status" value="1"/>
</dbReference>
<protein>
    <recommendedName>
        <fullName evidence="1">Putative agmatine deiminase</fullName>
        <ecNumber evidence="1">3.5.3.12</ecNumber>
    </recommendedName>
    <alternativeName>
        <fullName evidence="1">Agmatine iminohydrolase</fullName>
    </alternativeName>
</protein>
<accession>Q5X986</accession>
<sequence>MNTAPKQYGFYMPAEWYPHERCWMAWPCHHETWSKIGLDKAKMAYARVAKAIAQFEPVTLLVNPGDEDSATNLCKGHNIEIISLPINDSWTRDTGATFLINNEKQLAGVDWIHNAWGGNYADCSLDNLIASHLIKCTEAQYFHAPLVMEGGSFHVDGEGTILTSKECLLNSNRNPHLSQQEIEQYLINYLGAERIIWLNMGLIGDETDGHIDEIATFIAPGKVLCLITKDKEDPNYHRLQENFEILKSSKDARGRTFEVYTVEQPPATYLNGERLTLSYINFYMANQGIVMPAFGYESFDRLAYQLFVQIFPGYQITQIDALDVFSGGGGIHCITQQQPKSYKLGE</sequence>
<comment type="catalytic activity">
    <reaction evidence="1">
        <text>agmatine + H2O = N-carbamoylputrescine + NH4(+)</text>
        <dbReference type="Rhea" id="RHEA:18037"/>
        <dbReference type="ChEBI" id="CHEBI:15377"/>
        <dbReference type="ChEBI" id="CHEBI:28938"/>
        <dbReference type="ChEBI" id="CHEBI:58145"/>
        <dbReference type="ChEBI" id="CHEBI:58318"/>
        <dbReference type="EC" id="3.5.3.12"/>
    </reaction>
</comment>
<comment type="similarity">
    <text evidence="1">Belongs to the agmatine deiminase family.</text>
</comment>